<evidence type="ECO:0000269" key="1">
    <source>
    </source>
</evidence>
<evidence type="ECO:0000305" key="2"/>
<name>CAPSD_TMVDA</name>
<proteinExistence type="evidence at protein level"/>
<organismHost>
    <name type="scientific">Nicotiana tabacum</name>
    <name type="common">Common tobacco</name>
    <dbReference type="NCBI Taxonomy" id="4097"/>
</organismHost>
<dbReference type="PIR" id="A04175">
    <property type="entry name" value="VCTMDA"/>
</dbReference>
<dbReference type="SMR" id="P03575"/>
<dbReference type="iPTMnet" id="P03575"/>
<dbReference type="GO" id="GO:0019029">
    <property type="term" value="C:helical viral capsid"/>
    <property type="evidence" value="ECO:0007669"/>
    <property type="project" value="UniProtKB-KW"/>
</dbReference>
<dbReference type="GO" id="GO:0005198">
    <property type="term" value="F:structural molecule activity"/>
    <property type="evidence" value="ECO:0007669"/>
    <property type="project" value="InterPro"/>
</dbReference>
<dbReference type="Gene3D" id="1.20.120.70">
    <property type="entry name" value="Tobacco mosaic virus-like, coat protein"/>
    <property type="match status" value="1"/>
</dbReference>
<dbReference type="InterPro" id="IPR001337">
    <property type="entry name" value="TMV-like_coat"/>
</dbReference>
<dbReference type="InterPro" id="IPR036417">
    <property type="entry name" value="TMV-like_coat_sf"/>
</dbReference>
<dbReference type="Pfam" id="PF00721">
    <property type="entry name" value="TMV_coat"/>
    <property type="match status" value="1"/>
</dbReference>
<dbReference type="SUPFAM" id="SSF47195">
    <property type="entry name" value="TMV-like viral coat proteins"/>
    <property type="match status" value="1"/>
</dbReference>
<accession>P03575</accession>
<protein>
    <recommendedName>
        <fullName>Capsid protein</fullName>
    </recommendedName>
    <alternativeName>
        <fullName>Coat protein</fullName>
    </alternativeName>
</protein>
<sequence length="159" mass="17749">MSYSITSPSQFVFLSSVWADPIELLNVCTSSLGNQFQTQQARTTVQQQFSEVWKPFPQSTVRFPGDVYKVYRYNAVLDPLITALLGTFDTRNRIIEVENQQSPTTAETLDATRRVDDATVAIRSAINNLVNELVRGTGLYNQNTFESMSGLVWTSAPAS</sequence>
<gene>
    <name type="primary">CP</name>
</gene>
<feature type="initiator methionine" description="Removed; by host" evidence="1">
    <location>
        <position position="1"/>
    </location>
</feature>
<feature type="chain" id="PRO_0000144922" description="Capsid protein">
    <location>
        <begin position="2"/>
        <end position="159"/>
    </location>
</feature>
<feature type="modified residue" description="N-acetylserine; by host" evidence="1">
    <location>
        <position position="2"/>
    </location>
</feature>
<organism>
    <name type="scientific">Tobacco mosaic virus (strain Dahlemense)</name>
    <name type="common">TMV</name>
    <dbReference type="NCBI Taxonomy" id="12246"/>
    <lineage>
        <taxon>Viruses</taxon>
        <taxon>Riboviria</taxon>
        <taxon>Orthornavirae</taxon>
        <taxon>Kitrinoviricota</taxon>
        <taxon>Alsuviricetes</taxon>
        <taxon>Martellivirales</taxon>
        <taxon>Virgaviridae</taxon>
        <taxon>Tobamovirus</taxon>
        <taxon>Tobacco mosaic virus</taxon>
    </lineage>
</organism>
<keyword id="KW-0007">Acetylation</keyword>
<keyword id="KW-0167">Capsid protein</keyword>
<keyword id="KW-0903">Direct protein sequencing</keyword>
<keyword id="KW-1139">Helical capsid protein</keyword>
<keyword id="KW-0946">Virion</keyword>
<comment type="function">
    <text>Capsid protein self-assembles to form rod-shaped virions about 18 nm in diameter with a central canal enclosing the viral genomic RNA.</text>
</comment>
<comment type="subcellular location">
    <subcellularLocation>
        <location evidence="2">Virion</location>
    </subcellularLocation>
</comment>
<comment type="similarity">
    <text evidence="2">Belongs to the virgaviridae capsid protein family.</text>
</comment>
<reference key="1">
    <citation type="journal article" date="1963" name="Z. Vererbungsl.">
        <title>The primary protein structure of strain of tobacco mosaic virus. Amino acid sequences of the protein of the Dahlemense strains of tobacco mosaic virus. III. Discussion of results.</title>
        <authorList>
            <person name="Wittmann-Liebold B."/>
            <person name="Wittmann H.G."/>
        </authorList>
    </citation>
    <scope>PROTEIN SEQUENCE OF 2-159</scope>
    <scope>ACETYLATION AT SER-2</scope>
</reference>
<reference key="2">
    <citation type="journal article" date="1965" name="Z. Naturforsch. B">
        <title>Further studies on amino acid sequence of proteins in tobacco mosaic virus.</title>
        <authorList>
            <person name="Anderer F.A."/>
            <person name="Wittmann-Liebold B."/>
            <person name="Wittmann H.G."/>
        </authorList>
    </citation>
    <scope>PROTEIN SEQUENCE OF 45-49 AND 124-135</scope>
    <scope>SEQUENCE REVISION</scope>
</reference>